<protein>
    <recommendedName>
        <fullName evidence="1">Energy-coupling factor transporter ATP-binding protein EcfA2</fullName>
        <shortName evidence="1">ECF transporter A component EcfA2</shortName>
        <ecNumber evidence="1">7.-.-.-</ecNumber>
    </recommendedName>
</protein>
<proteinExistence type="inferred from homology"/>
<gene>
    <name evidence="1" type="primary">ecfA2</name>
    <name type="synonym">cbiO2</name>
    <name type="ordered locus">Cthe_2936</name>
</gene>
<reference key="1">
    <citation type="submission" date="2007-02" db="EMBL/GenBank/DDBJ databases">
        <title>Complete sequence of Clostridium thermocellum ATCC 27405.</title>
        <authorList>
            <consortium name="US DOE Joint Genome Institute"/>
            <person name="Copeland A."/>
            <person name="Lucas S."/>
            <person name="Lapidus A."/>
            <person name="Barry K."/>
            <person name="Detter J.C."/>
            <person name="Glavina del Rio T."/>
            <person name="Hammon N."/>
            <person name="Israni S."/>
            <person name="Dalin E."/>
            <person name="Tice H."/>
            <person name="Pitluck S."/>
            <person name="Chertkov O."/>
            <person name="Brettin T."/>
            <person name="Bruce D."/>
            <person name="Han C."/>
            <person name="Tapia R."/>
            <person name="Gilna P."/>
            <person name="Schmutz J."/>
            <person name="Larimer F."/>
            <person name="Land M."/>
            <person name="Hauser L."/>
            <person name="Kyrpides N."/>
            <person name="Mikhailova N."/>
            <person name="Wu J.H.D."/>
            <person name="Newcomb M."/>
            <person name="Richardson P."/>
        </authorList>
    </citation>
    <scope>NUCLEOTIDE SEQUENCE [LARGE SCALE GENOMIC DNA]</scope>
    <source>
        <strain>ATCC 27405 / DSM 1237 / JCM 9322 / NBRC 103400 / NCIMB 10682 / NRRL B-4536 / VPI 7372</strain>
    </source>
</reference>
<dbReference type="EC" id="7.-.-.-" evidence="1"/>
<dbReference type="EMBL" id="CP000568">
    <property type="protein sequence ID" value="ABN54134.1"/>
    <property type="molecule type" value="Genomic_DNA"/>
</dbReference>
<dbReference type="RefSeq" id="WP_003514686.1">
    <property type="nucleotide sequence ID" value="NC_009012.1"/>
</dbReference>
<dbReference type="SMR" id="A3DJK5"/>
<dbReference type="STRING" id="203119.Cthe_2936"/>
<dbReference type="GeneID" id="35805590"/>
<dbReference type="KEGG" id="cth:Cthe_2936"/>
<dbReference type="eggNOG" id="COG1122">
    <property type="taxonomic scope" value="Bacteria"/>
</dbReference>
<dbReference type="HOGENOM" id="CLU_000604_1_22_9"/>
<dbReference type="OrthoDB" id="9784332at2"/>
<dbReference type="Proteomes" id="UP000002145">
    <property type="component" value="Chromosome"/>
</dbReference>
<dbReference type="GO" id="GO:0043190">
    <property type="term" value="C:ATP-binding cassette (ABC) transporter complex"/>
    <property type="evidence" value="ECO:0007669"/>
    <property type="project" value="TreeGrafter"/>
</dbReference>
<dbReference type="GO" id="GO:0005524">
    <property type="term" value="F:ATP binding"/>
    <property type="evidence" value="ECO:0007669"/>
    <property type="project" value="UniProtKB-KW"/>
</dbReference>
<dbReference type="GO" id="GO:0016887">
    <property type="term" value="F:ATP hydrolysis activity"/>
    <property type="evidence" value="ECO:0007669"/>
    <property type="project" value="InterPro"/>
</dbReference>
<dbReference type="GO" id="GO:0042626">
    <property type="term" value="F:ATPase-coupled transmembrane transporter activity"/>
    <property type="evidence" value="ECO:0007669"/>
    <property type="project" value="TreeGrafter"/>
</dbReference>
<dbReference type="CDD" id="cd03225">
    <property type="entry name" value="ABC_cobalt_CbiO_domain1"/>
    <property type="match status" value="1"/>
</dbReference>
<dbReference type="FunFam" id="3.40.50.300:FF:000224">
    <property type="entry name" value="Energy-coupling factor transporter ATP-binding protein EcfA"/>
    <property type="match status" value="1"/>
</dbReference>
<dbReference type="Gene3D" id="3.40.50.300">
    <property type="entry name" value="P-loop containing nucleotide triphosphate hydrolases"/>
    <property type="match status" value="1"/>
</dbReference>
<dbReference type="InterPro" id="IPR003593">
    <property type="entry name" value="AAA+_ATPase"/>
</dbReference>
<dbReference type="InterPro" id="IPR003439">
    <property type="entry name" value="ABC_transporter-like_ATP-bd"/>
</dbReference>
<dbReference type="InterPro" id="IPR017871">
    <property type="entry name" value="ABC_transporter-like_CS"/>
</dbReference>
<dbReference type="InterPro" id="IPR015856">
    <property type="entry name" value="ABC_transpr_CbiO/EcfA_su"/>
</dbReference>
<dbReference type="InterPro" id="IPR050095">
    <property type="entry name" value="ECF_ABC_transporter_ATP-bd"/>
</dbReference>
<dbReference type="InterPro" id="IPR030946">
    <property type="entry name" value="EcfA2"/>
</dbReference>
<dbReference type="InterPro" id="IPR027417">
    <property type="entry name" value="P-loop_NTPase"/>
</dbReference>
<dbReference type="NCBIfam" id="TIGR04521">
    <property type="entry name" value="ECF_ATPase_2"/>
    <property type="match status" value="1"/>
</dbReference>
<dbReference type="NCBIfam" id="NF010158">
    <property type="entry name" value="PRK13637.1"/>
    <property type="match status" value="1"/>
</dbReference>
<dbReference type="PANTHER" id="PTHR43553:SF27">
    <property type="entry name" value="ENERGY-COUPLING FACTOR TRANSPORTER ATP-BINDING PROTEIN ECFA2"/>
    <property type="match status" value="1"/>
</dbReference>
<dbReference type="PANTHER" id="PTHR43553">
    <property type="entry name" value="HEAVY METAL TRANSPORTER"/>
    <property type="match status" value="1"/>
</dbReference>
<dbReference type="Pfam" id="PF00005">
    <property type="entry name" value="ABC_tran"/>
    <property type="match status" value="1"/>
</dbReference>
<dbReference type="SMART" id="SM00382">
    <property type="entry name" value="AAA"/>
    <property type="match status" value="1"/>
</dbReference>
<dbReference type="SUPFAM" id="SSF52540">
    <property type="entry name" value="P-loop containing nucleoside triphosphate hydrolases"/>
    <property type="match status" value="1"/>
</dbReference>
<dbReference type="PROSITE" id="PS00211">
    <property type="entry name" value="ABC_TRANSPORTER_1"/>
    <property type="match status" value="1"/>
</dbReference>
<dbReference type="PROSITE" id="PS50893">
    <property type="entry name" value="ABC_TRANSPORTER_2"/>
    <property type="match status" value="1"/>
</dbReference>
<dbReference type="PROSITE" id="PS51246">
    <property type="entry name" value="CBIO"/>
    <property type="match status" value="1"/>
</dbReference>
<sequence length="281" mass="31524">MSIKVTGLTYVYMKGTPYEKKALDNINLSIETGEFVGIIGHTGSGKSTLVQHFNGLLKPTSGSVYINGEELTGQRAKELKKQVGIVFQYPEHQLFEETVYKDIAFGLVRRGEEKDEIYRKVRKTIRLVGLSEDILDKSPFELSGGQKRRVAMAGILVLEPSILVLDEPAAGLDPKGREEIFELVSNLHKNNKMTVILVSHSMEDVAKYVQRVIVMNQGRIEMCGPVRSVFKNTETLEEIGLAAPQITYLMKKLKEKIPQINDDILTIAEAKEELAKYIRKA</sequence>
<accession>A3DJK5</accession>
<feature type="chain" id="PRO_0000287938" description="Energy-coupling factor transporter ATP-binding protein EcfA2">
    <location>
        <begin position="1"/>
        <end position="281"/>
    </location>
</feature>
<feature type="domain" description="ABC transporter" evidence="1">
    <location>
        <begin position="3"/>
        <end position="242"/>
    </location>
</feature>
<feature type="binding site" evidence="1">
    <location>
        <begin position="40"/>
        <end position="47"/>
    </location>
    <ligand>
        <name>ATP</name>
        <dbReference type="ChEBI" id="CHEBI:30616"/>
    </ligand>
</feature>
<comment type="function">
    <text evidence="1">ATP-binding (A) component of a common energy-coupling factor (ECF) ABC-transporter complex. Unlike classic ABC transporters this ECF transporter provides the energy necessary to transport a number of different substrates.</text>
</comment>
<comment type="subunit">
    <text evidence="1">Forms a stable energy-coupling factor (ECF) transporter complex composed of 2 membrane-embedded substrate-binding proteins (S component), 2 ATP-binding proteins (A component) and 2 transmembrane proteins (T component).</text>
</comment>
<comment type="subcellular location">
    <subcellularLocation>
        <location evidence="1">Cell membrane</location>
        <topology evidence="1">Peripheral membrane protein</topology>
    </subcellularLocation>
</comment>
<comment type="similarity">
    <text evidence="1">Belongs to the ABC transporter superfamily. Energy-coupling factor EcfA family.</text>
</comment>
<name>ECFA2_ACET2</name>
<keyword id="KW-0067">ATP-binding</keyword>
<keyword id="KW-1003">Cell membrane</keyword>
<keyword id="KW-0472">Membrane</keyword>
<keyword id="KW-0547">Nucleotide-binding</keyword>
<keyword id="KW-1185">Reference proteome</keyword>
<keyword id="KW-1278">Translocase</keyword>
<keyword id="KW-0813">Transport</keyword>
<evidence type="ECO:0000255" key="1">
    <source>
        <dbReference type="HAMAP-Rule" id="MF_01710"/>
    </source>
</evidence>
<organism>
    <name type="scientific">Acetivibrio thermocellus (strain ATCC 27405 / DSM 1237 / JCM 9322 / NBRC 103400 / NCIMB 10682 / NRRL B-4536 / VPI 7372)</name>
    <name type="common">Clostridium thermocellum</name>
    <dbReference type="NCBI Taxonomy" id="203119"/>
    <lineage>
        <taxon>Bacteria</taxon>
        <taxon>Bacillati</taxon>
        <taxon>Bacillota</taxon>
        <taxon>Clostridia</taxon>
        <taxon>Eubacteriales</taxon>
        <taxon>Oscillospiraceae</taxon>
        <taxon>Acetivibrio</taxon>
    </lineage>
</organism>